<evidence type="ECO:0000250" key="1"/>
<evidence type="ECO:0000255" key="2">
    <source>
        <dbReference type="HAMAP-Rule" id="MF_01320"/>
    </source>
</evidence>
<evidence type="ECO:0000256" key="3">
    <source>
        <dbReference type="SAM" id="MobiDB-lite"/>
    </source>
</evidence>
<evidence type="ECO:0000305" key="4"/>
<feature type="chain" id="PRO_0000237284" description="Large ribosomal subunit protein uL2c">
    <location>
        <begin position="1"/>
        <end position="278"/>
    </location>
</feature>
<feature type="region of interest" description="Disordered" evidence="3">
    <location>
        <begin position="222"/>
        <end position="241"/>
    </location>
</feature>
<comment type="subunit">
    <text evidence="1">Part of the 50S ribosomal subunit.</text>
</comment>
<comment type="subcellular location">
    <subcellularLocation>
        <location>Plastid</location>
        <location>Chloroplast</location>
    </subcellularLocation>
</comment>
<comment type="similarity">
    <text evidence="4">Belongs to the universal ribosomal protein uL2 family.</text>
</comment>
<geneLocation type="chloroplast"/>
<dbReference type="EMBL" id="AY835431">
    <property type="protein sequence ID" value="AAV80604.1"/>
    <property type="molecule type" value="Genomic_DNA"/>
</dbReference>
<dbReference type="RefSeq" id="YP_636180.1">
    <property type="nucleotide sequence ID" value="NC_008114.1"/>
</dbReference>
<dbReference type="SMR" id="Q3ZJ87"/>
<dbReference type="GeneID" id="4108784"/>
<dbReference type="GO" id="GO:0009507">
    <property type="term" value="C:chloroplast"/>
    <property type="evidence" value="ECO:0007669"/>
    <property type="project" value="UniProtKB-SubCell"/>
</dbReference>
<dbReference type="GO" id="GO:0005762">
    <property type="term" value="C:mitochondrial large ribosomal subunit"/>
    <property type="evidence" value="ECO:0007669"/>
    <property type="project" value="TreeGrafter"/>
</dbReference>
<dbReference type="GO" id="GO:0019843">
    <property type="term" value="F:rRNA binding"/>
    <property type="evidence" value="ECO:0007669"/>
    <property type="project" value="UniProtKB-UniRule"/>
</dbReference>
<dbReference type="GO" id="GO:0003735">
    <property type="term" value="F:structural constituent of ribosome"/>
    <property type="evidence" value="ECO:0007669"/>
    <property type="project" value="InterPro"/>
</dbReference>
<dbReference type="GO" id="GO:0016740">
    <property type="term" value="F:transferase activity"/>
    <property type="evidence" value="ECO:0007669"/>
    <property type="project" value="InterPro"/>
</dbReference>
<dbReference type="GO" id="GO:0032543">
    <property type="term" value="P:mitochondrial translation"/>
    <property type="evidence" value="ECO:0007669"/>
    <property type="project" value="TreeGrafter"/>
</dbReference>
<dbReference type="FunFam" id="2.30.30.30:FF:000001">
    <property type="entry name" value="50S ribosomal protein L2"/>
    <property type="match status" value="1"/>
</dbReference>
<dbReference type="FunFam" id="2.40.50.140:FF:000003">
    <property type="entry name" value="50S ribosomal protein L2"/>
    <property type="match status" value="1"/>
</dbReference>
<dbReference type="FunFam" id="4.10.950.10:FF:000001">
    <property type="entry name" value="50S ribosomal protein L2"/>
    <property type="match status" value="1"/>
</dbReference>
<dbReference type="Gene3D" id="2.30.30.30">
    <property type="match status" value="1"/>
</dbReference>
<dbReference type="Gene3D" id="2.40.50.140">
    <property type="entry name" value="Nucleic acid-binding proteins"/>
    <property type="match status" value="1"/>
</dbReference>
<dbReference type="Gene3D" id="4.10.950.10">
    <property type="entry name" value="Ribosomal protein L2, domain 3"/>
    <property type="match status" value="1"/>
</dbReference>
<dbReference type="HAMAP" id="MF_01320_B">
    <property type="entry name" value="Ribosomal_uL2_B"/>
    <property type="match status" value="1"/>
</dbReference>
<dbReference type="InterPro" id="IPR012340">
    <property type="entry name" value="NA-bd_OB-fold"/>
</dbReference>
<dbReference type="InterPro" id="IPR014722">
    <property type="entry name" value="Rib_uL2_dom2"/>
</dbReference>
<dbReference type="InterPro" id="IPR002171">
    <property type="entry name" value="Ribosomal_uL2"/>
</dbReference>
<dbReference type="InterPro" id="IPR005880">
    <property type="entry name" value="Ribosomal_uL2_bac/org-type"/>
</dbReference>
<dbReference type="InterPro" id="IPR022669">
    <property type="entry name" value="Ribosomal_uL2_C"/>
</dbReference>
<dbReference type="InterPro" id="IPR022671">
    <property type="entry name" value="Ribosomal_uL2_CS"/>
</dbReference>
<dbReference type="InterPro" id="IPR014726">
    <property type="entry name" value="Ribosomal_uL2_dom3"/>
</dbReference>
<dbReference type="InterPro" id="IPR022666">
    <property type="entry name" value="Ribosomal_uL2_RNA-bd_dom"/>
</dbReference>
<dbReference type="InterPro" id="IPR008991">
    <property type="entry name" value="Translation_prot_SH3-like_sf"/>
</dbReference>
<dbReference type="NCBIfam" id="TIGR01171">
    <property type="entry name" value="rplB_bact"/>
    <property type="match status" value="1"/>
</dbReference>
<dbReference type="PANTHER" id="PTHR13691:SF5">
    <property type="entry name" value="LARGE RIBOSOMAL SUBUNIT PROTEIN UL2M"/>
    <property type="match status" value="1"/>
</dbReference>
<dbReference type="PANTHER" id="PTHR13691">
    <property type="entry name" value="RIBOSOMAL PROTEIN L2"/>
    <property type="match status" value="1"/>
</dbReference>
<dbReference type="Pfam" id="PF00181">
    <property type="entry name" value="Ribosomal_L2"/>
    <property type="match status" value="1"/>
</dbReference>
<dbReference type="Pfam" id="PF03947">
    <property type="entry name" value="Ribosomal_L2_C"/>
    <property type="match status" value="1"/>
</dbReference>
<dbReference type="PIRSF" id="PIRSF002158">
    <property type="entry name" value="Ribosomal_L2"/>
    <property type="match status" value="1"/>
</dbReference>
<dbReference type="SMART" id="SM01383">
    <property type="entry name" value="Ribosomal_L2"/>
    <property type="match status" value="1"/>
</dbReference>
<dbReference type="SMART" id="SM01382">
    <property type="entry name" value="Ribosomal_L2_C"/>
    <property type="match status" value="1"/>
</dbReference>
<dbReference type="SUPFAM" id="SSF50249">
    <property type="entry name" value="Nucleic acid-binding proteins"/>
    <property type="match status" value="1"/>
</dbReference>
<dbReference type="SUPFAM" id="SSF50104">
    <property type="entry name" value="Translation proteins SH3-like domain"/>
    <property type="match status" value="1"/>
</dbReference>
<dbReference type="PROSITE" id="PS00467">
    <property type="entry name" value="RIBOSOMAL_L2"/>
    <property type="match status" value="1"/>
</dbReference>
<reference key="1">
    <citation type="journal article" date="2005" name="Mol. Biol. Evol.">
        <title>The chloroplast genome sequence of the green alga Pseudendoclonium akinetum (Ulvophyceae) reveals unusual structural features and new insights into the branching order of chlorophyte lineages.</title>
        <authorList>
            <person name="Pombert J.-F."/>
            <person name="Otis C."/>
            <person name="Lemieux C."/>
            <person name="Turmel M."/>
        </authorList>
    </citation>
    <scope>NUCLEOTIDE SEQUENCE [LARGE SCALE GENOMIC DNA]</scope>
    <source>
        <strain>UTEX 1912</strain>
    </source>
</reference>
<accession>Q3ZJ87</accession>
<gene>
    <name type="primary">rpl2</name>
</gene>
<keyword id="KW-0150">Chloroplast</keyword>
<keyword id="KW-0934">Plastid</keyword>
<keyword id="KW-0687">Ribonucleoprotein</keyword>
<keyword id="KW-0689">Ribosomal protein</keyword>
<organism>
    <name type="scientific">Tupiella akineta</name>
    <name type="common">Green alga</name>
    <name type="synonym">Pseudendoclonium akinetum</name>
    <dbReference type="NCBI Taxonomy" id="160070"/>
    <lineage>
        <taxon>Eukaryota</taxon>
        <taxon>Viridiplantae</taxon>
        <taxon>Chlorophyta</taxon>
        <taxon>Ulvophyceae</taxon>
        <taxon>OUU clade</taxon>
        <taxon>Ulotrichales</taxon>
        <taxon>Tupiellaceae</taxon>
        <taxon>Tupiella</taxon>
    </lineage>
</organism>
<protein>
    <recommendedName>
        <fullName evidence="2">Large ribosomal subunit protein uL2c</fullName>
    </recommendedName>
    <alternativeName>
        <fullName evidence="4">50S ribosomal protein L2, chloroplastic</fullName>
    </alternativeName>
</protein>
<sequence length="278" mass="30759">MGLRLYKPYTASTRNRSVSDFSEITEKKPEKTLTSWVFRSKGRNNRGIITSRHLGGGHKRLYRLIDFKRQKIGILGKVATIEYDPNRNARIVLLHYQDGAKGYILHPRGLKVGGTVVTSPEAPILIGNCLPLKAIPLGTEVHNVELYSGMGGQLSRAAGSSAQIVAKEGRFVTLRLPSGEVRLVSQNCWATIGQVGNVDANNIRIGKAGRMRWLGRRPKVRGVVMNPNDHPHGGGEGRSPIGRKCPVSLWGRLALGERTRKSKKYSNKLILKRRKASK</sequence>
<proteinExistence type="inferred from homology"/>
<name>RK2_TUPAK</name>